<protein>
    <recommendedName>
        <fullName>Neurogenic differentiation factor 6</fullName>
        <shortName>NeuroD6</shortName>
    </recommendedName>
</protein>
<sequence length="337" mass="38705">MLTLPFDESVVMPESQMCRKFSRECEDQKQIKKPESFSKQIVLRGKSIKRAPGEETEKEEEEEDREEEDENGLPRRRGLRKKKTTKLRLERVKFRRQEANARERNRMHGLNDALDNLRKVVPCYSKTQKLSKIETLRLAKNYIWALSEILRIGKRPDLLTFVQNLCKGLSQPTTNLVAGCLQLNARSFLMGQGGEAAHHTRSPYSTFYPPYHSPELTTPPGHGTLDNSKSMKPYNYCSAYESFYESTSPECASPQFEGPLSPPPINYNGIFSLKQEETLDYGKNYNYGMHYCAVPPRGPLGQGAMFRLPTDSHFPYDLHLRSQSLTMQDELNAVFHN</sequence>
<organism>
    <name type="scientific">Macaca fascicularis</name>
    <name type="common">Crab-eating macaque</name>
    <name type="synonym">Cynomolgus monkey</name>
    <dbReference type="NCBI Taxonomy" id="9541"/>
    <lineage>
        <taxon>Eukaryota</taxon>
        <taxon>Metazoa</taxon>
        <taxon>Chordata</taxon>
        <taxon>Craniata</taxon>
        <taxon>Vertebrata</taxon>
        <taxon>Euteleostomi</taxon>
        <taxon>Mammalia</taxon>
        <taxon>Eutheria</taxon>
        <taxon>Euarchontoglires</taxon>
        <taxon>Primates</taxon>
        <taxon>Haplorrhini</taxon>
        <taxon>Catarrhini</taxon>
        <taxon>Cercopithecidae</taxon>
        <taxon>Cercopithecinae</taxon>
        <taxon>Macaca</taxon>
    </lineage>
</organism>
<accession>Q4R5G6</accession>
<feature type="chain" id="PRO_0000279745" description="Neurogenic differentiation factor 6">
    <location>
        <begin position="1"/>
        <end position="337"/>
    </location>
</feature>
<feature type="domain" description="bHLH" evidence="3">
    <location>
        <begin position="94"/>
        <end position="146"/>
    </location>
</feature>
<feature type="region of interest" description="Disordered" evidence="4">
    <location>
        <begin position="43"/>
        <end position="82"/>
    </location>
</feature>
<feature type="short sequence motif" description="Nuclear localization signal" evidence="2">
    <location>
        <begin position="80"/>
        <end position="86"/>
    </location>
</feature>
<feature type="compositionally biased region" description="Acidic residues" evidence="4">
    <location>
        <begin position="54"/>
        <end position="71"/>
    </location>
</feature>
<comment type="function">
    <text evidence="1">Activates E box-dependent transcription in collaboration with TCF3/E47. May be a trans-acting factor involved in the development and maintenance of the mammalian nervous system. Transactivates the promoter of its own gene (By similarity).</text>
</comment>
<comment type="subunit">
    <text evidence="1">Efficient DNA binding requires dimerization with another bHLH protein.</text>
</comment>
<comment type="subcellular location">
    <subcellularLocation>
        <location evidence="5">Nucleus</location>
    </subcellularLocation>
</comment>
<reference key="1">
    <citation type="submission" date="2005-06" db="EMBL/GenBank/DDBJ databases">
        <title>DNA sequences of macaque genes expressed in brain or testis and its evolutionary implications.</title>
        <authorList>
            <consortium name="International consortium for macaque cDNA sequencing and analysis"/>
        </authorList>
    </citation>
    <scope>NUCLEOTIDE SEQUENCE [LARGE SCALE MRNA]</scope>
    <source>
        <tissue>Parietal cortex</tissue>
    </source>
</reference>
<proteinExistence type="evidence at transcript level"/>
<keyword id="KW-0010">Activator</keyword>
<keyword id="KW-0217">Developmental protein</keyword>
<keyword id="KW-0221">Differentiation</keyword>
<keyword id="KW-0238">DNA-binding</keyword>
<keyword id="KW-0524">Neurogenesis</keyword>
<keyword id="KW-0539">Nucleus</keyword>
<keyword id="KW-1185">Reference proteome</keyword>
<keyword id="KW-0804">Transcription</keyword>
<keyword id="KW-0805">Transcription regulation</keyword>
<name>NDF6_MACFA</name>
<dbReference type="EMBL" id="AB169577">
    <property type="protein sequence ID" value="BAE01659.1"/>
    <property type="molecule type" value="mRNA"/>
</dbReference>
<dbReference type="RefSeq" id="NP_001271786.1">
    <property type="nucleotide sequence ID" value="NM_001284857.1"/>
</dbReference>
<dbReference type="RefSeq" id="XP_045244925.1">
    <property type="nucleotide sequence ID" value="XM_045388990.2"/>
</dbReference>
<dbReference type="SMR" id="Q4R5G6"/>
<dbReference type="STRING" id="9541.ENSMFAP00000012662"/>
<dbReference type="Ensembl" id="ENSMFAT00000059588.2">
    <property type="protein sequence ID" value="ENSMFAP00000012662.1"/>
    <property type="gene ID" value="ENSMFAG00000025612.2"/>
</dbReference>
<dbReference type="GeneID" id="101926074"/>
<dbReference type="VEuPathDB" id="HostDB:ENSMFAG00000025612"/>
<dbReference type="eggNOG" id="KOG3898">
    <property type="taxonomic scope" value="Eukaryota"/>
</dbReference>
<dbReference type="GeneTree" id="ENSGT00940000159827"/>
<dbReference type="OMA" id="FPYDFHL"/>
<dbReference type="Proteomes" id="UP000233100">
    <property type="component" value="Chromosome 3"/>
</dbReference>
<dbReference type="Bgee" id="ENSMFAG00000025612">
    <property type="expression patterns" value="Expressed in frontal cortex and 1 other cell type or tissue"/>
</dbReference>
<dbReference type="GO" id="GO:0005634">
    <property type="term" value="C:nucleus"/>
    <property type="evidence" value="ECO:0007669"/>
    <property type="project" value="UniProtKB-SubCell"/>
</dbReference>
<dbReference type="GO" id="GO:0001228">
    <property type="term" value="F:DNA-binding transcription activator activity, RNA polymerase II-specific"/>
    <property type="evidence" value="ECO:0007669"/>
    <property type="project" value="Ensembl"/>
</dbReference>
<dbReference type="GO" id="GO:0070888">
    <property type="term" value="F:E-box binding"/>
    <property type="evidence" value="ECO:0007669"/>
    <property type="project" value="TreeGrafter"/>
</dbReference>
<dbReference type="GO" id="GO:0046983">
    <property type="term" value="F:protein dimerization activity"/>
    <property type="evidence" value="ECO:0007669"/>
    <property type="project" value="InterPro"/>
</dbReference>
<dbReference type="GO" id="GO:0061564">
    <property type="term" value="P:axon development"/>
    <property type="evidence" value="ECO:0007669"/>
    <property type="project" value="TreeGrafter"/>
</dbReference>
<dbReference type="GO" id="GO:0021542">
    <property type="term" value="P:dentate gyrus development"/>
    <property type="evidence" value="ECO:0007669"/>
    <property type="project" value="Ensembl"/>
</dbReference>
<dbReference type="GO" id="GO:0007423">
    <property type="term" value="P:sensory organ development"/>
    <property type="evidence" value="ECO:0007669"/>
    <property type="project" value="TreeGrafter"/>
</dbReference>
<dbReference type="CDD" id="cd19722">
    <property type="entry name" value="bHLH_TS_NeuroD6_ATOH2"/>
    <property type="match status" value="1"/>
</dbReference>
<dbReference type="FunFam" id="4.10.280.10:FF:000006">
    <property type="entry name" value="Neurogenic differentiation factor"/>
    <property type="match status" value="1"/>
</dbReference>
<dbReference type="Gene3D" id="4.10.280.10">
    <property type="entry name" value="Helix-loop-helix DNA-binding domain"/>
    <property type="match status" value="1"/>
</dbReference>
<dbReference type="InterPro" id="IPR011598">
    <property type="entry name" value="bHLH_dom"/>
</dbReference>
<dbReference type="InterPro" id="IPR050359">
    <property type="entry name" value="bHLH_transcription_factors"/>
</dbReference>
<dbReference type="InterPro" id="IPR036638">
    <property type="entry name" value="HLH_DNA-bd_sf"/>
</dbReference>
<dbReference type="InterPro" id="IPR022575">
    <property type="entry name" value="NeuroD_DUF"/>
</dbReference>
<dbReference type="InterPro" id="IPR016637">
    <property type="entry name" value="TF_bHLH_NeuroD"/>
</dbReference>
<dbReference type="PANTHER" id="PTHR19290">
    <property type="entry name" value="BASIC HELIX-LOOP-HELIX PROTEIN NEUROGENIN-RELATED"/>
    <property type="match status" value="1"/>
</dbReference>
<dbReference type="PANTHER" id="PTHR19290:SF9">
    <property type="entry name" value="NEUROGENIC DIFFERENTIATION FACTOR 6"/>
    <property type="match status" value="1"/>
</dbReference>
<dbReference type="Pfam" id="PF00010">
    <property type="entry name" value="HLH"/>
    <property type="match status" value="1"/>
</dbReference>
<dbReference type="Pfam" id="PF12533">
    <property type="entry name" value="Neuro_bHLH"/>
    <property type="match status" value="1"/>
</dbReference>
<dbReference type="PIRSF" id="PIRSF015618">
    <property type="entry name" value="bHLH_NeuroD"/>
    <property type="match status" value="1"/>
</dbReference>
<dbReference type="SMART" id="SM00353">
    <property type="entry name" value="HLH"/>
    <property type="match status" value="1"/>
</dbReference>
<dbReference type="SUPFAM" id="SSF47459">
    <property type="entry name" value="HLH, helix-loop-helix DNA-binding domain"/>
    <property type="match status" value="1"/>
</dbReference>
<dbReference type="PROSITE" id="PS50888">
    <property type="entry name" value="BHLH"/>
    <property type="match status" value="1"/>
</dbReference>
<evidence type="ECO:0000250" key="1"/>
<evidence type="ECO:0000255" key="2"/>
<evidence type="ECO:0000255" key="3">
    <source>
        <dbReference type="PROSITE-ProRule" id="PRU00981"/>
    </source>
</evidence>
<evidence type="ECO:0000256" key="4">
    <source>
        <dbReference type="SAM" id="MobiDB-lite"/>
    </source>
</evidence>
<evidence type="ECO:0000305" key="5"/>
<gene>
    <name type="primary">NEUROD6</name>
    <name type="ORF">QnpA-11784</name>
</gene>